<organism>
    <name type="scientific">Arabidopsis thaliana</name>
    <name type="common">Mouse-ear cress</name>
    <dbReference type="NCBI Taxonomy" id="3702"/>
    <lineage>
        <taxon>Eukaryota</taxon>
        <taxon>Viridiplantae</taxon>
        <taxon>Streptophyta</taxon>
        <taxon>Embryophyta</taxon>
        <taxon>Tracheophyta</taxon>
        <taxon>Spermatophyta</taxon>
        <taxon>Magnoliopsida</taxon>
        <taxon>eudicotyledons</taxon>
        <taxon>Gunneridae</taxon>
        <taxon>Pentapetalae</taxon>
        <taxon>rosids</taxon>
        <taxon>malvids</taxon>
        <taxon>Brassicales</taxon>
        <taxon>Brassicaceae</taxon>
        <taxon>Camelineae</taxon>
        <taxon>Arabidopsis</taxon>
    </lineage>
</organism>
<comment type="function">
    <text evidence="1">May operate as a cation/H(+) antiporter.</text>
</comment>
<comment type="subcellular location">
    <subcellularLocation>
        <location evidence="1">Membrane</location>
        <topology evidence="1">Multi-pass membrane protein</topology>
    </subcellularLocation>
</comment>
<comment type="tissue specificity">
    <text evidence="3">Preferentially expressed in pollen.</text>
</comment>
<comment type="similarity">
    <text evidence="4">Belongs to the monovalent cation:proton antiporter 2 (CPA2) transporter (TC 2.A.37) family. CHX (TC 2.A.37.4) subfamily.</text>
</comment>
<comment type="sequence caution" evidence="4">
    <conflict type="erroneous gene model prediction">
        <sequence resource="EMBL-CDS" id="AAF18257"/>
    </conflict>
    <text>The predicted gene has been split into 4 genes: At1g08135, At1g08140, At1g08150 and At1g08160.</text>
</comment>
<comment type="sequence caution" evidence="4">
    <conflict type="erroneous gene model prediction">
        <sequence resource="EMBL-CDS" id="AAF79832"/>
    </conflict>
    <text>The predicted gene has been split into 4 genes: At1g08135, At1g08140, At1g08150 and At1g08160.</text>
</comment>
<protein>
    <recommendedName>
        <fullName>Cation/H(+) antiporter 6B</fullName>
    </recommendedName>
    <alternativeName>
        <fullName>Protein CATION/H+ EXCHANGER 6b</fullName>
        <shortName>AtCHX6b</shortName>
    </alternativeName>
</protein>
<evidence type="ECO:0000250" key="1"/>
<evidence type="ECO:0000255" key="2"/>
<evidence type="ECO:0000269" key="3">
    <source>
    </source>
</evidence>
<evidence type="ECO:0000305" key="4"/>
<sequence>MDAENATWRKEFMWNNDEKRAEMGTKMFCDVSPHIMLNSHGVAEKMASGSKGMDFWEYPLPQLEIIILSIFLLWRLFDMLFKKLGVPIPKFTSMMLVGAVLSEMFGSMQIPCLKHIFIHYNQYMTKVPDTIGAFAFVLDWFLRGVTTDVGIMKKSGTKSVVIGITSMIIPWQIGKLLYSSREKSSILTMTEMEYTVMTFTMSMTPFTCVNMLLTDLKIVHTDFGQIAQSAGMVTDLLAFFLTVSAYVSRDETQGVKMGLAFMAFFIFVYLVRQFMLWVIRHTPEGAPVKNVYLYIGLLLAYLSYLYWSRFLFFGPLGAFALGLAVPNGPPLGSVFIQKFDSFNEGIFLPLFGSLSMIKLDWSFLRKEFGNGRHLHGHMYECFSFLPIVYIAKFATSFLAALATKIPLRDSIILGVIMGTKSSFELGYVLTAFEKDRISLEVLSLLGVYILVNSLLTPMAIHFLYDRSKRFVCYGRRNLKEKPEMQTLVCINKPDNITSMISLLRATSPSKDSPMECCVLHLIELLGQATPTFISHQLQKPKPGSRSYSENVISSFQLFQEVYWDSASINMFTSLTSAKEMHEQICWFALSQGSNLILLSFHRTWEPNGNVIISDDQTLRSLNLNVLKRAPCSVGIFVYRKPIWQTKALESPCRVCLIYVGGNDDKEALALADHMRGNQQVILTVLRLIPTSYADESSLRIHSQMVDMNRHEDQRPGDKSTIIDWTVGDGTETSKILHSVSYDYDLFIVGRRSGVGTTVTRGLGDWMEFEELGVIGDLLASEYFPSRASVLVVQQQE</sequence>
<proteinExistence type="evidence at transcript level"/>
<name>CHX6B_ARATH</name>
<reference key="1">
    <citation type="journal article" date="2000" name="Nature">
        <title>Sequence and analysis of chromosome 1 of the plant Arabidopsis thaliana.</title>
        <authorList>
            <person name="Theologis A."/>
            <person name="Ecker J.R."/>
            <person name="Palm C.J."/>
            <person name="Federspiel N.A."/>
            <person name="Kaul S."/>
            <person name="White O."/>
            <person name="Alonso J."/>
            <person name="Altafi H."/>
            <person name="Araujo R."/>
            <person name="Bowman C.L."/>
            <person name="Brooks S.Y."/>
            <person name="Buehler E."/>
            <person name="Chan A."/>
            <person name="Chao Q."/>
            <person name="Chen H."/>
            <person name="Cheuk R.F."/>
            <person name="Chin C.W."/>
            <person name="Chung M.K."/>
            <person name="Conn L."/>
            <person name="Conway A.B."/>
            <person name="Conway A.R."/>
            <person name="Creasy T.H."/>
            <person name="Dewar K."/>
            <person name="Dunn P."/>
            <person name="Etgu P."/>
            <person name="Feldblyum T.V."/>
            <person name="Feng J.-D."/>
            <person name="Fong B."/>
            <person name="Fujii C.Y."/>
            <person name="Gill J.E."/>
            <person name="Goldsmith A.D."/>
            <person name="Haas B."/>
            <person name="Hansen N.F."/>
            <person name="Hughes B."/>
            <person name="Huizar L."/>
            <person name="Hunter J.L."/>
            <person name="Jenkins J."/>
            <person name="Johnson-Hopson C."/>
            <person name="Khan S."/>
            <person name="Khaykin E."/>
            <person name="Kim C.J."/>
            <person name="Koo H.L."/>
            <person name="Kremenetskaia I."/>
            <person name="Kurtz D.B."/>
            <person name="Kwan A."/>
            <person name="Lam B."/>
            <person name="Langin-Hooper S."/>
            <person name="Lee A."/>
            <person name="Lee J.M."/>
            <person name="Lenz C.A."/>
            <person name="Li J.H."/>
            <person name="Li Y.-P."/>
            <person name="Lin X."/>
            <person name="Liu S.X."/>
            <person name="Liu Z.A."/>
            <person name="Luros J.S."/>
            <person name="Maiti R."/>
            <person name="Marziali A."/>
            <person name="Militscher J."/>
            <person name="Miranda M."/>
            <person name="Nguyen M."/>
            <person name="Nierman W.C."/>
            <person name="Osborne B.I."/>
            <person name="Pai G."/>
            <person name="Peterson J."/>
            <person name="Pham P.K."/>
            <person name="Rizzo M."/>
            <person name="Rooney T."/>
            <person name="Rowley D."/>
            <person name="Sakano H."/>
            <person name="Salzberg S.L."/>
            <person name="Schwartz J.R."/>
            <person name="Shinn P."/>
            <person name="Southwick A.M."/>
            <person name="Sun H."/>
            <person name="Tallon L.J."/>
            <person name="Tambunga G."/>
            <person name="Toriumi M.J."/>
            <person name="Town C.D."/>
            <person name="Utterback T."/>
            <person name="Van Aken S."/>
            <person name="Vaysberg M."/>
            <person name="Vysotskaia V.S."/>
            <person name="Walker M."/>
            <person name="Wu D."/>
            <person name="Yu G."/>
            <person name="Fraser C.M."/>
            <person name="Venter J.C."/>
            <person name="Davis R.W."/>
        </authorList>
    </citation>
    <scope>NUCLEOTIDE SEQUENCE [LARGE SCALE GENOMIC DNA]</scope>
    <source>
        <strain>cv. Columbia</strain>
    </source>
</reference>
<reference key="2">
    <citation type="journal article" date="2017" name="Plant J.">
        <title>Araport11: a complete reannotation of the Arabidopsis thaliana reference genome.</title>
        <authorList>
            <person name="Cheng C.Y."/>
            <person name="Krishnakumar V."/>
            <person name="Chan A.P."/>
            <person name="Thibaud-Nissen F."/>
            <person name="Schobel S."/>
            <person name="Town C.D."/>
        </authorList>
    </citation>
    <scope>GENOME REANNOTATION</scope>
    <source>
        <strain>cv. Columbia</strain>
    </source>
</reference>
<reference key="3">
    <citation type="journal article" date="2001" name="Plant Physiol.">
        <title>Phylogenetic relationships within cation transporter families of Arabidopsis.</title>
        <authorList>
            <person name="Maeser P."/>
            <person name="Thomine S."/>
            <person name="Schroeder J.I."/>
            <person name="Ward J.M."/>
            <person name="Hirschi K."/>
            <person name="Sze H."/>
            <person name="Talke I.N."/>
            <person name="Amtmann A."/>
            <person name="Maathuis F.J.M."/>
            <person name="Sanders D."/>
            <person name="Harper J.F."/>
            <person name="Tchieu J."/>
            <person name="Gribskov M."/>
            <person name="Persans M.W."/>
            <person name="Salt D.E."/>
            <person name="Kim S.A."/>
            <person name="Guerinot M.L."/>
        </authorList>
    </citation>
    <scope>GENE FAMILY</scope>
    <scope>NOMENCLATURE</scope>
</reference>
<reference key="4">
    <citation type="journal article" date="2004" name="Plant Physiol.">
        <title>Expression patterns of a novel AtCHX gene family highlight potential roles in osmotic adjustment and K+ homeostasis in pollen development.</title>
        <authorList>
            <person name="Sze H."/>
            <person name="Padmanaban S."/>
            <person name="Cellier F."/>
            <person name="Honys D."/>
            <person name="Cheng N.-H."/>
            <person name="Bock K.W."/>
            <person name="Conejero G."/>
            <person name="Li X."/>
            <person name="Twell D."/>
            <person name="Ward J.M."/>
            <person name="Hirschi K.D."/>
        </authorList>
    </citation>
    <scope>TISSUE SPECIFICITY</scope>
    <scope>GENE FAMILY</scope>
    <scope>NOMENCLATURE</scope>
</reference>
<keyword id="KW-0050">Antiport</keyword>
<keyword id="KW-0406">Ion transport</keyword>
<keyword id="KW-0472">Membrane</keyword>
<keyword id="KW-0630">Potassium</keyword>
<keyword id="KW-0633">Potassium transport</keyword>
<keyword id="KW-1185">Reference proteome</keyword>
<keyword id="KW-0812">Transmembrane</keyword>
<keyword id="KW-1133">Transmembrane helix</keyword>
<keyword id="KW-0813">Transport</keyword>
<dbReference type="EMBL" id="AC011438">
    <property type="protein sequence ID" value="AAF18257.1"/>
    <property type="status" value="ALT_SEQ"/>
    <property type="molecule type" value="Genomic_DNA"/>
</dbReference>
<dbReference type="EMBL" id="AC026875">
    <property type="protein sequence ID" value="AAF79832.1"/>
    <property type="status" value="ALT_SEQ"/>
    <property type="molecule type" value="Genomic_DNA"/>
</dbReference>
<dbReference type="EMBL" id="CP002684">
    <property type="protein sequence ID" value="AEE28252.1"/>
    <property type="molecule type" value="Genomic_DNA"/>
</dbReference>
<dbReference type="PIR" id="A86216">
    <property type="entry name" value="A86216"/>
</dbReference>
<dbReference type="RefSeq" id="NP_849610.2">
    <property type="nucleotide sequence ID" value="NM_179279.3"/>
</dbReference>
<dbReference type="SMR" id="P0CG16"/>
<dbReference type="STRING" id="3702.P0CG16"/>
<dbReference type="PaxDb" id="3702-AT1G08135.1"/>
<dbReference type="ProteomicsDB" id="246976"/>
<dbReference type="EnsemblPlants" id="AT1G08135.1">
    <property type="protein sequence ID" value="AT1G08135.1"/>
    <property type="gene ID" value="AT1G08135"/>
</dbReference>
<dbReference type="GeneID" id="837334"/>
<dbReference type="Gramene" id="AT1G08135.1">
    <property type="protein sequence ID" value="AT1G08135.1"/>
    <property type="gene ID" value="AT1G08135"/>
</dbReference>
<dbReference type="KEGG" id="ath:AT1G08135"/>
<dbReference type="Araport" id="AT1G08135"/>
<dbReference type="TAIR" id="AT1G08135">
    <property type="gene designation" value="CHX6B"/>
</dbReference>
<dbReference type="eggNOG" id="KOG1650">
    <property type="taxonomic scope" value="Eukaryota"/>
</dbReference>
<dbReference type="HOGENOM" id="CLU_005126_6_1_1"/>
<dbReference type="InParanoid" id="P0CG16"/>
<dbReference type="OMA" id="HMIDDEA"/>
<dbReference type="PRO" id="PR:P0CG16"/>
<dbReference type="Proteomes" id="UP000006548">
    <property type="component" value="Chromosome 1"/>
</dbReference>
<dbReference type="ExpressionAtlas" id="P0CG16">
    <property type="expression patterns" value="baseline and differential"/>
</dbReference>
<dbReference type="GO" id="GO:0016020">
    <property type="term" value="C:membrane"/>
    <property type="evidence" value="ECO:0007669"/>
    <property type="project" value="UniProtKB-SubCell"/>
</dbReference>
<dbReference type="GO" id="GO:0015297">
    <property type="term" value="F:antiporter activity"/>
    <property type="evidence" value="ECO:0007669"/>
    <property type="project" value="UniProtKB-KW"/>
</dbReference>
<dbReference type="GO" id="GO:0006813">
    <property type="term" value="P:potassium ion transport"/>
    <property type="evidence" value="ECO:0007669"/>
    <property type="project" value="UniProtKB-KW"/>
</dbReference>
<dbReference type="GO" id="GO:1902600">
    <property type="term" value="P:proton transmembrane transport"/>
    <property type="evidence" value="ECO:0007669"/>
    <property type="project" value="InterPro"/>
</dbReference>
<dbReference type="Gene3D" id="1.20.1530.20">
    <property type="match status" value="1"/>
</dbReference>
<dbReference type="InterPro" id="IPR006153">
    <property type="entry name" value="Cation/H_exchanger_TM"/>
</dbReference>
<dbReference type="InterPro" id="IPR050794">
    <property type="entry name" value="CPA2_transporter"/>
</dbReference>
<dbReference type="InterPro" id="IPR038770">
    <property type="entry name" value="Na+/solute_symporter_sf"/>
</dbReference>
<dbReference type="PANTHER" id="PTHR32468">
    <property type="entry name" value="CATION/H + ANTIPORTER"/>
    <property type="match status" value="1"/>
</dbReference>
<dbReference type="PANTHER" id="PTHR32468:SF67">
    <property type="entry name" value="CATION_H(+) ANTIPORTER 6B"/>
    <property type="match status" value="1"/>
</dbReference>
<dbReference type="Pfam" id="PF00999">
    <property type="entry name" value="Na_H_Exchanger"/>
    <property type="match status" value="1"/>
</dbReference>
<gene>
    <name type="primary">CHX6b</name>
    <name type="synonym">CHX06b</name>
    <name type="ordered locus">At1g08135</name>
    <name type="ORF">T23G18.2</name>
    <name type="ORF">T6D22.24</name>
</gene>
<accession>P0CG16</accession>
<accession>Q9LMZ3</accession>
<accession>Q9SGE4</accession>
<feature type="chain" id="PRO_0000394977" description="Cation/H(+) antiporter 6B">
    <location>
        <begin position="1"/>
        <end position="796"/>
    </location>
</feature>
<feature type="transmembrane region" description="Helical" evidence="2">
    <location>
        <begin position="54"/>
        <end position="74"/>
    </location>
</feature>
<feature type="transmembrane region" description="Helical" evidence="2">
    <location>
        <begin position="93"/>
        <end position="113"/>
    </location>
</feature>
<feature type="transmembrane region" description="Helical" evidence="2">
    <location>
        <begin position="131"/>
        <end position="151"/>
    </location>
</feature>
<feature type="transmembrane region" description="Helical" evidence="2">
    <location>
        <begin position="159"/>
        <end position="179"/>
    </location>
</feature>
<feature type="transmembrane region" description="Helical" evidence="2">
    <location>
        <begin position="194"/>
        <end position="213"/>
    </location>
</feature>
<feature type="transmembrane region" description="Helical" evidence="2">
    <location>
        <begin position="223"/>
        <end position="243"/>
    </location>
</feature>
<feature type="transmembrane region" description="Helical" evidence="2">
    <location>
        <begin position="259"/>
        <end position="279"/>
    </location>
</feature>
<feature type="transmembrane region" description="Helical" evidence="2">
    <location>
        <begin position="285"/>
        <end position="305"/>
    </location>
</feature>
<feature type="transmembrane region" description="Helical" evidence="2">
    <location>
        <begin position="310"/>
        <end position="330"/>
    </location>
</feature>
<feature type="transmembrane region" description="Helical" evidence="2">
    <location>
        <begin position="344"/>
        <end position="364"/>
    </location>
</feature>
<feature type="transmembrane region" description="Helical" evidence="2">
    <location>
        <begin position="382"/>
        <end position="402"/>
    </location>
</feature>
<feature type="transmembrane region" description="Helical" evidence="2">
    <location>
        <begin position="411"/>
        <end position="431"/>
    </location>
</feature>
<feature type="transmembrane region" description="Helical" evidence="2">
    <location>
        <begin position="444"/>
        <end position="464"/>
    </location>
</feature>